<organism>
    <name type="scientific">Xylella fastidiosa (strain M23)</name>
    <dbReference type="NCBI Taxonomy" id="405441"/>
    <lineage>
        <taxon>Bacteria</taxon>
        <taxon>Pseudomonadati</taxon>
        <taxon>Pseudomonadota</taxon>
        <taxon>Gammaproteobacteria</taxon>
        <taxon>Lysobacterales</taxon>
        <taxon>Lysobacteraceae</taxon>
        <taxon>Xylella</taxon>
    </lineage>
</organism>
<accession>B2I6C2</accession>
<gene>
    <name evidence="1" type="primary">hemL</name>
    <name type="ordered locus">XfasM23_1419</name>
</gene>
<protein>
    <recommendedName>
        <fullName evidence="1">Glutamate-1-semialdehyde 2,1-aminomutase</fullName>
        <shortName evidence="1">GSA</shortName>
        <ecNumber evidence="1">5.4.3.8</ecNumber>
    </recommendedName>
    <alternativeName>
        <fullName evidence="1">Glutamate-1-semialdehyde aminotransferase</fullName>
        <shortName evidence="1">GSA-AT</shortName>
    </alternativeName>
</protein>
<dbReference type="EC" id="5.4.3.8" evidence="1"/>
<dbReference type="EMBL" id="CP001011">
    <property type="protein sequence ID" value="ACB92832.1"/>
    <property type="molecule type" value="Genomic_DNA"/>
</dbReference>
<dbReference type="RefSeq" id="WP_004089531.1">
    <property type="nucleotide sequence ID" value="NC_010577.1"/>
</dbReference>
<dbReference type="SMR" id="B2I6C2"/>
<dbReference type="GeneID" id="93905152"/>
<dbReference type="KEGG" id="xfn:XfasM23_1419"/>
<dbReference type="HOGENOM" id="CLU_016922_1_5_6"/>
<dbReference type="UniPathway" id="UPA00251">
    <property type="reaction ID" value="UER00317"/>
</dbReference>
<dbReference type="Proteomes" id="UP000001698">
    <property type="component" value="Chromosome"/>
</dbReference>
<dbReference type="GO" id="GO:0005737">
    <property type="term" value="C:cytoplasm"/>
    <property type="evidence" value="ECO:0007669"/>
    <property type="project" value="UniProtKB-SubCell"/>
</dbReference>
<dbReference type="GO" id="GO:0042286">
    <property type="term" value="F:glutamate-1-semialdehyde 2,1-aminomutase activity"/>
    <property type="evidence" value="ECO:0007669"/>
    <property type="project" value="UniProtKB-UniRule"/>
</dbReference>
<dbReference type="GO" id="GO:0030170">
    <property type="term" value="F:pyridoxal phosphate binding"/>
    <property type="evidence" value="ECO:0007669"/>
    <property type="project" value="InterPro"/>
</dbReference>
<dbReference type="GO" id="GO:0008483">
    <property type="term" value="F:transaminase activity"/>
    <property type="evidence" value="ECO:0007669"/>
    <property type="project" value="InterPro"/>
</dbReference>
<dbReference type="GO" id="GO:0006782">
    <property type="term" value="P:protoporphyrinogen IX biosynthetic process"/>
    <property type="evidence" value="ECO:0007669"/>
    <property type="project" value="UniProtKB-UniRule"/>
</dbReference>
<dbReference type="CDD" id="cd00610">
    <property type="entry name" value="OAT_like"/>
    <property type="match status" value="1"/>
</dbReference>
<dbReference type="FunFam" id="3.40.640.10:FF:000021">
    <property type="entry name" value="Glutamate-1-semialdehyde 2,1-aminomutase"/>
    <property type="match status" value="1"/>
</dbReference>
<dbReference type="Gene3D" id="3.90.1150.10">
    <property type="entry name" value="Aspartate Aminotransferase, domain 1"/>
    <property type="match status" value="1"/>
</dbReference>
<dbReference type="Gene3D" id="3.40.640.10">
    <property type="entry name" value="Type I PLP-dependent aspartate aminotransferase-like (Major domain)"/>
    <property type="match status" value="1"/>
</dbReference>
<dbReference type="HAMAP" id="MF_00375">
    <property type="entry name" value="HemL_aminotrans_3"/>
    <property type="match status" value="1"/>
</dbReference>
<dbReference type="InterPro" id="IPR004639">
    <property type="entry name" value="4pyrrol_synth_GluAld_NH2Trfase"/>
</dbReference>
<dbReference type="InterPro" id="IPR005814">
    <property type="entry name" value="Aminotrans_3"/>
</dbReference>
<dbReference type="InterPro" id="IPR049704">
    <property type="entry name" value="Aminotrans_3_PPA_site"/>
</dbReference>
<dbReference type="InterPro" id="IPR015424">
    <property type="entry name" value="PyrdxlP-dep_Trfase"/>
</dbReference>
<dbReference type="InterPro" id="IPR015421">
    <property type="entry name" value="PyrdxlP-dep_Trfase_major"/>
</dbReference>
<dbReference type="InterPro" id="IPR015422">
    <property type="entry name" value="PyrdxlP-dep_Trfase_small"/>
</dbReference>
<dbReference type="NCBIfam" id="TIGR00713">
    <property type="entry name" value="hemL"/>
    <property type="match status" value="1"/>
</dbReference>
<dbReference type="NCBIfam" id="NF000818">
    <property type="entry name" value="PRK00062.1"/>
    <property type="match status" value="1"/>
</dbReference>
<dbReference type="PANTHER" id="PTHR43713">
    <property type="entry name" value="GLUTAMATE-1-SEMIALDEHYDE 2,1-AMINOMUTASE"/>
    <property type="match status" value="1"/>
</dbReference>
<dbReference type="PANTHER" id="PTHR43713:SF3">
    <property type="entry name" value="GLUTAMATE-1-SEMIALDEHYDE 2,1-AMINOMUTASE 1, CHLOROPLASTIC-RELATED"/>
    <property type="match status" value="1"/>
</dbReference>
<dbReference type="Pfam" id="PF00202">
    <property type="entry name" value="Aminotran_3"/>
    <property type="match status" value="1"/>
</dbReference>
<dbReference type="SUPFAM" id="SSF53383">
    <property type="entry name" value="PLP-dependent transferases"/>
    <property type="match status" value="1"/>
</dbReference>
<dbReference type="PROSITE" id="PS00600">
    <property type="entry name" value="AA_TRANSFER_CLASS_3"/>
    <property type="match status" value="1"/>
</dbReference>
<reference key="1">
    <citation type="journal article" date="2010" name="J. Bacteriol.">
        <title>Whole genome sequences of two Xylella fastidiosa strains (M12 and M23) causing almond leaf scorch disease in California.</title>
        <authorList>
            <person name="Chen J."/>
            <person name="Xie G."/>
            <person name="Han S."/>
            <person name="Chertkov O."/>
            <person name="Sims D."/>
            <person name="Civerolo E.L."/>
        </authorList>
    </citation>
    <scope>NUCLEOTIDE SEQUENCE [LARGE SCALE GENOMIC DNA]</scope>
    <source>
        <strain>M23</strain>
    </source>
</reference>
<sequence length="444" mass="47175">MNHSRSHALFVQAQTRIPGGVNSPVRAFRSVGGEPFFVARADGPYLFDVDGHRYIDYVGSWGPMIVGHNHPAVREAVQVAISNGLSYGAPCAAEVTMAETIARLVPSCEMVRMVNSGTEATLSAIRLARGATGRNYIVKFEGCYHGHGDSFLVKGGSGMLTLGIPSSPGVPAELSKLTITLTYNDFDAATALFEEMGHHIAAVIVEPVIGNANCIPPQPGYLQHLRTLCTQYAVLLIFDEVMTGFRVALGGAQALYGVTPDLTTFGKIIGGGMPVGAYGGRRDLMQHIAPTGPIYQAGTLSGNPVAMAAGLAMLELIQAPDFYTHLSNAAAALCTGLQQAASQAGIAMTTQQIGGMFGLFFTDQQVETYAQATACNTDRFNRFFHAMLQRGVFFAPSAYEAGFISSAHSPNIIETTLEAARTAFQTIANEAAILSKSETPIKMR</sequence>
<proteinExistence type="inferred from homology"/>
<keyword id="KW-0963">Cytoplasm</keyword>
<keyword id="KW-0413">Isomerase</keyword>
<keyword id="KW-0627">Porphyrin biosynthesis</keyword>
<keyword id="KW-0663">Pyridoxal phosphate</keyword>
<comment type="catalytic activity">
    <reaction evidence="1">
        <text>(S)-4-amino-5-oxopentanoate = 5-aminolevulinate</text>
        <dbReference type="Rhea" id="RHEA:14265"/>
        <dbReference type="ChEBI" id="CHEBI:57501"/>
        <dbReference type="ChEBI" id="CHEBI:356416"/>
        <dbReference type="EC" id="5.4.3.8"/>
    </reaction>
</comment>
<comment type="cofactor">
    <cofactor evidence="1">
        <name>pyridoxal 5'-phosphate</name>
        <dbReference type="ChEBI" id="CHEBI:597326"/>
    </cofactor>
</comment>
<comment type="pathway">
    <text evidence="1">Porphyrin-containing compound metabolism; protoporphyrin-IX biosynthesis; 5-aminolevulinate from L-glutamyl-tRNA(Glu): step 2/2.</text>
</comment>
<comment type="subunit">
    <text evidence="1">Homodimer.</text>
</comment>
<comment type="subcellular location">
    <subcellularLocation>
        <location evidence="1">Cytoplasm</location>
    </subcellularLocation>
</comment>
<comment type="similarity">
    <text evidence="1">Belongs to the class-III pyridoxal-phosphate-dependent aminotransferase family. HemL subfamily.</text>
</comment>
<feature type="chain" id="PRO_1000121931" description="Glutamate-1-semialdehyde 2,1-aminomutase">
    <location>
        <begin position="1"/>
        <end position="444"/>
    </location>
</feature>
<feature type="modified residue" description="N6-(pyridoxal phosphate)lysine" evidence="1">
    <location>
        <position position="267"/>
    </location>
</feature>
<evidence type="ECO:0000255" key="1">
    <source>
        <dbReference type="HAMAP-Rule" id="MF_00375"/>
    </source>
</evidence>
<name>GSA_XYLF2</name>